<accession>P59106</accession>
<feature type="chain" id="PRO_0000066396" description="Sporulation protein YpeB">
    <location>
        <begin position="1"/>
        <end position="447"/>
    </location>
</feature>
<name>YPEB_OCEIH</name>
<evidence type="ECO:0000250" key="1"/>
<evidence type="ECO:0000305" key="2"/>
<gene>
    <name type="ordered locus">OB1805</name>
</gene>
<keyword id="KW-0309">Germination</keyword>
<keyword id="KW-1185">Reference proteome</keyword>
<keyword id="KW-0749">Sporulation</keyword>
<comment type="function">
    <text evidence="1">Required for spore cortex hydrolysis during germination. Appears to be required for either expression, localization, activation or function of SleB (By similarity).</text>
</comment>
<comment type="similarity">
    <text evidence="2">Belongs to the YpeB family.</text>
</comment>
<proteinExistence type="inferred from homology"/>
<sequence>MFRWIAIGVLSVAVIGTAVWGYNEYSEKNEIKIQAENEYQRSFHELTYYMDLLNDEIGTALAMNSKERLSPQFVDIWRLTSQAHSNVGQLPLGLLPFHKTEQFLSDIGEFTYQTAVRNLDDNPLTEEETQKLKDYYDQSGQIKDELRQVQHVALEEGLNWMDVELALSDENAQQDNTIVNGFQTVEKSVEGFGQADPENSTISTNTQDHSYKNLTGSEVTENEALQRAMEIFEIKDKDLLSISKSGEGADTPLYSISYNKDEEHGYMDMAIKGGHPLNLLVSREMKEKKVSLNEGSEKAKDYLASFGLEDMTLFQSSEYDHIGVYSYLYNDNGVRVYSDAVEVKVGLDNGDLLGLTTNSYFMNHTDREIPEPKISEDEARDNVNSTVDIQESHLAIIDNNAGEEVLTYEFLGIMDDETYRIFINAENGQEELVEKLDGKEVNYNSVL</sequence>
<organism>
    <name type="scientific">Oceanobacillus iheyensis (strain DSM 14371 / CIP 107618 / JCM 11309 / KCTC 3954 / HTE831)</name>
    <dbReference type="NCBI Taxonomy" id="221109"/>
    <lineage>
        <taxon>Bacteria</taxon>
        <taxon>Bacillati</taxon>
        <taxon>Bacillota</taxon>
        <taxon>Bacilli</taxon>
        <taxon>Bacillales</taxon>
        <taxon>Bacillaceae</taxon>
        <taxon>Oceanobacillus</taxon>
    </lineage>
</organism>
<reference key="1">
    <citation type="journal article" date="2002" name="Nucleic Acids Res.">
        <title>Genome sequence of Oceanobacillus iheyensis isolated from the Iheya Ridge and its unexpected adaptive capabilities to extreme environments.</title>
        <authorList>
            <person name="Takami H."/>
            <person name="Takaki Y."/>
            <person name="Uchiyama I."/>
        </authorList>
    </citation>
    <scope>NUCLEOTIDE SEQUENCE [LARGE SCALE GENOMIC DNA]</scope>
    <source>
        <strain>DSM 14371 / CIP 107618 / JCM 11309 / KCTC 3954 / HTE831</strain>
    </source>
</reference>
<dbReference type="EMBL" id="BA000028">
    <property type="protein sequence ID" value="BAC13761.1"/>
    <property type="molecule type" value="Genomic_DNA"/>
</dbReference>
<dbReference type="RefSeq" id="WP_011066203.1">
    <property type="nucleotide sequence ID" value="NC_004193.1"/>
</dbReference>
<dbReference type="SMR" id="P59106"/>
<dbReference type="STRING" id="221109.gene:10734045"/>
<dbReference type="KEGG" id="oih:OB1805"/>
<dbReference type="eggNOG" id="COG2959">
    <property type="taxonomic scope" value="Bacteria"/>
</dbReference>
<dbReference type="HOGENOM" id="CLU_045803_0_0_9"/>
<dbReference type="OrthoDB" id="2372097at2"/>
<dbReference type="Proteomes" id="UP000000822">
    <property type="component" value="Chromosome"/>
</dbReference>
<dbReference type="GO" id="GO:0009847">
    <property type="term" value="P:spore germination"/>
    <property type="evidence" value="ECO:0007669"/>
    <property type="project" value="InterPro"/>
</dbReference>
<dbReference type="GO" id="GO:0030435">
    <property type="term" value="P:sporulation resulting in formation of a cellular spore"/>
    <property type="evidence" value="ECO:0007669"/>
    <property type="project" value="UniProtKB-KW"/>
</dbReference>
<dbReference type="InterPro" id="IPR025711">
    <property type="entry name" value="PepSY"/>
</dbReference>
<dbReference type="InterPro" id="IPR048402">
    <property type="entry name" value="YpeB_N"/>
</dbReference>
<dbReference type="InterPro" id="IPR014239">
    <property type="entry name" value="YpeB_PepSY1-2"/>
</dbReference>
<dbReference type="NCBIfam" id="TIGR02889">
    <property type="entry name" value="spore_YpeB"/>
    <property type="match status" value="1"/>
</dbReference>
<dbReference type="Pfam" id="PF03413">
    <property type="entry name" value="PepSY"/>
    <property type="match status" value="1"/>
</dbReference>
<dbReference type="Pfam" id="PF20769">
    <property type="entry name" value="YPEB_N"/>
    <property type="match status" value="1"/>
</dbReference>
<dbReference type="Pfam" id="PF14620">
    <property type="entry name" value="YPEB_PepSY1-2"/>
    <property type="match status" value="1"/>
</dbReference>
<protein>
    <recommendedName>
        <fullName>Sporulation protein YpeB</fullName>
    </recommendedName>
</protein>